<gene>
    <name type="primary">Tmem64</name>
</gene>
<evidence type="ECO:0000250" key="1">
    <source>
        <dbReference type="UniProtKB" id="P36164"/>
    </source>
</evidence>
<evidence type="ECO:0000255" key="2"/>
<evidence type="ECO:0000256" key="3">
    <source>
        <dbReference type="SAM" id="MobiDB-lite"/>
    </source>
</evidence>
<evidence type="ECO:0000269" key="4">
    <source>
    </source>
</evidence>
<evidence type="ECO:0000269" key="5">
    <source>
    </source>
</evidence>
<evidence type="ECO:0000305" key="6"/>
<accession>Q3U145</accession>
<accession>Q3TCK1</accession>
<accession>Q3TE31</accession>
<accession>Q6YI45</accession>
<accession>Q8CBJ4</accession>
<accession>Q8K2Q6</accession>
<organism>
    <name type="scientific">Mus musculus</name>
    <name type="common">Mouse</name>
    <dbReference type="NCBI Taxonomy" id="10090"/>
    <lineage>
        <taxon>Eukaryota</taxon>
        <taxon>Metazoa</taxon>
        <taxon>Chordata</taxon>
        <taxon>Craniata</taxon>
        <taxon>Vertebrata</taxon>
        <taxon>Euteleostomi</taxon>
        <taxon>Mammalia</taxon>
        <taxon>Eutheria</taxon>
        <taxon>Euarchontoglires</taxon>
        <taxon>Glires</taxon>
        <taxon>Rodentia</taxon>
        <taxon>Myomorpha</taxon>
        <taxon>Muroidea</taxon>
        <taxon>Muridae</taxon>
        <taxon>Murinae</taxon>
        <taxon>Mus</taxon>
        <taxon>Mus</taxon>
    </lineage>
</organism>
<feature type="chain" id="PRO_0000287343" description="Transmembrane protein 64">
    <location>
        <begin position="1"/>
        <end position="381"/>
    </location>
</feature>
<feature type="transmembrane region" description="Helical" evidence="2">
    <location>
        <begin position="52"/>
        <end position="72"/>
    </location>
</feature>
<feature type="transmembrane region" description="Helical" evidence="2">
    <location>
        <begin position="85"/>
        <end position="105"/>
    </location>
</feature>
<feature type="transmembrane region" description="Helical" evidence="2">
    <location>
        <begin position="121"/>
        <end position="141"/>
    </location>
</feature>
<feature type="transmembrane region" description="Helical" evidence="2">
    <location>
        <begin position="161"/>
        <end position="181"/>
    </location>
</feature>
<feature type="transmembrane region" description="Helical" evidence="2">
    <location>
        <begin position="189"/>
        <end position="209"/>
    </location>
</feature>
<feature type="transmembrane region" description="Helical" evidence="2">
    <location>
        <begin position="310"/>
        <end position="330"/>
    </location>
</feature>
<feature type="region of interest" description="Disordered" evidence="3">
    <location>
        <begin position="1"/>
        <end position="50"/>
    </location>
</feature>
<feature type="region of interest" description="VTT domain" evidence="1">
    <location>
        <begin position="187"/>
        <end position="297"/>
    </location>
</feature>
<feature type="compositionally biased region" description="Basic and acidic residues" evidence="3">
    <location>
        <begin position="37"/>
        <end position="47"/>
    </location>
</feature>
<feature type="sequence conflict" description="In Ref. 1; AAN05738 and 4; AAH30341." evidence="6" ref="1 4">
    <original>N</original>
    <variation>S</variation>
    <location>
        <position position="3"/>
    </location>
</feature>
<feature type="sequence conflict" description="In Ref. 2; BAE41417." evidence="6" ref="2">
    <original>Y</original>
    <variation>D</variation>
    <location>
        <position position="71"/>
    </location>
</feature>
<feature type="sequence conflict" description="In Ref. 2; BAE41417." evidence="6" ref="2">
    <original>S</original>
    <variation>R</variation>
    <location>
        <position position="154"/>
    </location>
</feature>
<feature type="sequence conflict" description="In Ref. 4; AAH30341." evidence="6" ref="4">
    <original>S</original>
    <variation>L</variation>
    <location>
        <position position="358"/>
    </location>
</feature>
<keyword id="KW-0256">Endoplasmic reticulum</keyword>
<keyword id="KW-0472">Membrane</keyword>
<keyword id="KW-1185">Reference proteome</keyword>
<keyword id="KW-0812">Transmembrane</keyword>
<keyword id="KW-1133">Transmembrane helix</keyword>
<dbReference type="EMBL" id="AY147882">
    <property type="protein sequence ID" value="AAN05738.1"/>
    <property type="status" value="ALT_FRAME"/>
    <property type="molecule type" value="mRNA"/>
</dbReference>
<dbReference type="EMBL" id="AK035894">
    <property type="protein sequence ID" value="BAC29231.1"/>
    <property type="molecule type" value="mRNA"/>
</dbReference>
<dbReference type="EMBL" id="AK156282">
    <property type="protein sequence ID" value="BAE33655.1"/>
    <property type="molecule type" value="mRNA"/>
</dbReference>
<dbReference type="EMBL" id="AK169861">
    <property type="protein sequence ID" value="BAE41417.1"/>
    <property type="molecule type" value="mRNA"/>
</dbReference>
<dbReference type="EMBL" id="AK170682">
    <property type="protein sequence ID" value="BAE41955.1"/>
    <property type="molecule type" value="mRNA"/>
</dbReference>
<dbReference type="EMBL" id="AL732571">
    <property type="status" value="NOT_ANNOTATED_CDS"/>
    <property type="molecule type" value="Genomic_DNA"/>
</dbReference>
<dbReference type="EMBL" id="BC030341">
    <property type="protein sequence ID" value="AAH30341.1"/>
    <property type="molecule type" value="mRNA"/>
</dbReference>
<dbReference type="CCDS" id="CCDS17983.1"/>
<dbReference type="RefSeq" id="NP_852066.2">
    <property type="nucleotide sequence ID" value="NM_181401.3"/>
</dbReference>
<dbReference type="SMR" id="Q3U145"/>
<dbReference type="BioGRID" id="221400">
    <property type="interactions" value="2"/>
</dbReference>
<dbReference type="FunCoup" id="Q3U145">
    <property type="interactions" value="995"/>
</dbReference>
<dbReference type="STRING" id="10090.ENSMUSP00000055892"/>
<dbReference type="PhosphoSitePlus" id="Q3U145"/>
<dbReference type="SwissPalm" id="Q3U145"/>
<dbReference type="PaxDb" id="10090-ENSMUSP00000055892"/>
<dbReference type="ProteomicsDB" id="259038"/>
<dbReference type="Antibodypedia" id="77108">
    <property type="antibodies" value="29 antibodies from 8 providers"/>
</dbReference>
<dbReference type="Ensembl" id="ENSMUST00000062684.9">
    <property type="protein sequence ID" value="ENSMUSP00000055892.9"/>
    <property type="gene ID" value="ENSMUSG00000043252.9"/>
</dbReference>
<dbReference type="GeneID" id="100201"/>
<dbReference type="KEGG" id="mmu:100201"/>
<dbReference type="UCSC" id="uc008sbk.2">
    <property type="organism name" value="mouse"/>
</dbReference>
<dbReference type="AGR" id="MGI:2140359"/>
<dbReference type="CTD" id="169200"/>
<dbReference type="MGI" id="MGI:2140359">
    <property type="gene designation" value="Tmem64"/>
</dbReference>
<dbReference type="VEuPathDB" id="HostDB:ENSMUSG00000043252"/>
<dbReference type="eggNOG" id="KOG3140">
    <property type="taxonomic scope" value="Eukaryota"/>
</dbReference>
<dbReference type="GeneTree" id="ENSGT00390000007813"/>
<dbReference type="HOGENOM" id="CLU_069147_0_0_1"/>
<dbReference type="InParanoid" id="Q3U145"/>
<dbReference type="OMA" id="QNGLYHC"/>
<dbReference type="OrthoDB" id="166803at2759"/>
<dbReference type="PhylomeDB" id="Q3U145"/>
<dbReference type="TreeFam" id="TF323931"/>
<dbReference type="BioGRID-ORCS" id="100201">
    <property type="hits" value="3 hits in 78 CRISPR screens"/>
</dbReference>
<dbReference type="ChiTaRS" id="Tmem64">
    <property type="organism name" value="mouse"/>
</dbReference>
<dbReference type="PRO" id="PR:Q3U145"/>
<dbReference type="Proteomes" id="UP000000589">
    <property type="component" value="Chromosome 4"/>
</dbReference>
<dbReference type="RNAct" id="Q3U145">
    <property type="molecule type" value="protein"/>
</dbReference>
<dbReference type="Bgee" id="ENSMUSG00000043252">
    <property type="expression patterns" value="Expressed in urinary bladder urothelium and 228 other cell types or tissues"/>
</dbReference>
<dbReference type="GO" id="GO:0005783">
    <property type="term" value="C:endoplasmic reticulum"/>
    <property type="evidence" value="ECO:0000314"/>
    <property type="project" value="MGI"/>
</dbReference>
<dbReference type="GO" id="GO:0016020">
    <property type="term" value="C:membrane"/>
    <property type="evidence" value="ECO:0007669"/>
    <property type="project" value="UniProtKB-SubCell"/>
</dbReference>
<dbReference type="GO" id="GO:0090090">
    <property type="term" value="P:negative regulation of canonical Wnt signaling pathway"/>
    <property type="evidence" value="ECO:0000315"/>
    <property type="project" value="UniProtKB"/>
</dbReference>
<dbReference type="GO" id="GO:0045668">
    <property type="term" value="P:negative regulation of osteoblast differentiation"/>
    <property type="evidence" value="ECO:0000315"/>
    <property type="project" value="UniProtKB"/>
</dbReference>
<dbReference type="GO" id="GO:0030316">
    <property type="term" value="P:osteoclast differentiation"/>
    <property type="evidence" value="ECO:0000315"/>
    <property type="project" value="MGI"/>
</dbReference>
<dbReference type="GO" id="GO:0045780">
    <property type="term" value="P:positive regulation of bone resorption"/>
    <property type="evidence" value="ECO:0000315"/>
    <property type="project" value="MGI"/>
</dbReference>
<dbReference type="GO" id="GO:0045600">
    <property type="term" value="P:positive regulation of fat cell differentiation"/>
    <property type="evidence" value="ECO:0000315"/>
    <property type="project" value="UniProtKB"/>
</dbReference>
<dbReference type="GO" id="GO:0045672">
    <property type="term" value="P:positive regulation of osteoclast differentiation"/>
    <property type="evidence" value="ECO:0000315"/>
    <property type="project" value="MGI"/>
</dbReference>
<dbReference type="GO" id="GO:0051480">
    <property type="term" value="P:regulation of cytosolic calcium ion concentration"/>
    <property type="evidence" value="ECO:0000315"/>
    <property type="project" value="MGI"/>
</dbReference>
<dbReference type="InterPro" id="IPR053069">
    <property type="entry name" value="TVP38/TMEM64"/>
</dbReference>
<dbReference type="InterPro" id="IPR032816">
    <property type="entry name" value="VTT_dom"/>
</dbReference>
<dbReference type="PANTHER" id="PTHR46593">
    <property type="entry name" value="TRANSMEMBRANE PROTEIN 64"/>
    <property type="match status" value="1"/>
</dbReference>
<dbReference type="PANTHER" id="PTHR46593:SF1">
    <property type="entry name" value="TRANSMEMBRANE PROTEIN 64"/>
    <property type="match status" value="1"/>
</dbReference>
<dbReference type="Pfam" id="PF09335">
    <property type="entry name" value="VTT_dom"/>
    <property type="match status" value="1"/>
</dbReference>
<sequence>MRNPGGSLPHTLPRALQHAGRTGVVEQPGRWAPERTAGGDRSEDRLPRGGGASAAAAAAAAAASGALLGAYLERHGLPAASDLPAPAGALAGGPGSGGGVVVGVAEVRNWRCCCLGSTCWCRSLVLVCVLAALCFASLALVRRYLQHLLLWVESLDSLLGVLLFVVGFIVVSFPCGWGYIVLNVAAGYLYGFVLGMGLMVVGVLIGTFIAHVVCKRLLTAWVAARIQNSDKLSAVIRVVEGGSGLKVVALARLTPIPFGLQNAVFSITDVPLPSYLMASSAGLLPTQLLNSYLGTTLRTMEDVIAEQSLSGYFVFCLQIVISIGLMFYVVHRAQVELNAAIVACEMELKTSLVKGNQSDPSGSSFYNKRTLTFSGGGINIV</sequence>
<name>TMM64_MOUSE</name>
<protein>
    <recommendedName>
        <fullName>Transmembrane protein 64</fullName>
    </recommendedName>
</protein>
<proteinExistence type="evidence at protein level"/>
<comment type="function">
    <text evidence="4 5">Positively regulates TNFSF11-induced osteoclast differentiation. Acts as a regulator of TNFSF11-mediated Ca(2+) signaling pathways via its interaction with SERCA2 which is critical for the TNFSF11-induced CREB1 activation and mitochondrial ROS generation necessary for proper osteoclast generation. Association between TMEM64 and SERCA2 in the ER leads to cytosolic Ca (2+) spiking for activation of NFATC1 and production of mitochondrial ROS, thereby triggering Ca (2+) signaling cascades that promote osteoclast differentiation and activation (PubMed:23395171). Negatively regulates osteoblast differentiation and positively regulates adipocyte differentiation via modulation of the canonical Wnt signaling pathway. Mediates the switch in lineage commitment to osteogenesis rather than to adipogenesis in mesenchymal stem cells by negatively regulating the expression, activity and nuclear localization of CTNNB1 (PubMed:25979161).</text>
</comment>
<comment type="subunit">
    <text evidence="4">Interacts with ATP2A2 (PubMed:23395171).</text>
</comment>
<comment type="subcellular location">
    <subcellularLocation>
        <location evidence="2">Membrane</location>
        <topology evidence="2">Multi-pass membrane protein</topology>
    </subcellularLocation>
    <subcellularLocation>
        <location evidence="4">Endoplasmic reticulum</location>
    </subcellularLocation>
</comment>
<comment type="tissue specificity">
    <text evidence="4">Liver, testis, kidney and muscle.</text>
</comment>
<comment type="domain">
    <text evidence="1">The VTT domain was previously called the SNARE-assoc domain. As there is no evidence that this domain associates with SNARE proteins, it was renamed as VMP1, TMEM41, and TVP38 (VTT) domain.</text>
</comment>
<comment type="disruption phenotype">
    <text evidence="4 5">Mice exhibit increased bone mass due in part to impaired osteoclast formation. Bones show reduced osteoclast numbers (PubMed:23395171). Increased osteogenesis and impaired adipogenesis observed in bone marrow-derived stromal cells (PubMed:25979161).</text>
</comment>
<comment type="similarity">
    <text evidence="6">Belongs to the TVP38/TMEM64 family.</text>
</comment>
<comment type="sequence caution" evidence="6">
    <conflict type="frameshift">
        <sequence resource="EMBL-CDS" id="AAN05738"/>
    </conflict>
</comment>
<reference key="1">
    <citation type="submission" date="2002-09" db="EMBL/GenBank/DDBJ databases">
        <authorList>
            <person name="Ding P."/>
            <person name="Jin C."/>
            <person name="Han W."/>
            <person name="Wang L."/>
            <person name="Song Q."/>
            <person name="Zhang Y."/>
            <person name="Ma D."/>
        </authorList>
    </citation>
    <scope>NUCLEOTIDE SEQUENCE [MRNA]</scope>
    <source>
        <tissue>Kidney</tissue>
    </source>
</reference>
<reference key="2">
    <citation type="journal article" date="2005" name="Science">
        <title>The transcriptional landscape of the mammalian genome.</title>
        <authorList>
            <person name="Carninci P."/>
            <person name="Kasukawa T."/>
            <person name="Katayama S."/>
            <person name="Gough J."/>
            <person name="Frith M.C."/>
            <person name="Maeda N."/>
            <person name="Oyama R."/>
            <person name="Ravasi T."/>
            <person name="Lenhard B."/>
            <person name="Wells C."/>
            <person name="Kodzius R."/>
            <person name="Shimokawa K."/>
            <person name="Bajic V.B."/>
            <person name="Brenner S.E."/>
            <person name="Batalov S."/>
            <person name="Forrest A.R."/>
            <person name="Zavolan M."/>
            <person name="Davis M.J."/>
            <person name="Wilming L.G."/>
            <person name="Aidinis V."/>
            <person name="Allen J.E."/>
            <person name="Ambesi-Impiombato A."/>
            <person name="Apweiler R."/>
            <person name="Aturaliya R.N."/>
            <person name="Bailey T.L."/>
            <person name="Bansal M."/>
            <person name="Baxter L."/>
            <person name="Beisel K.W."/>
            <person name="Bersano T."/>
            <person name="Bono H."/>
            <person name="Chalk A.M."/>
            <person name="Chiu K.P."/>
            <person name="Choudhary V."/>
            <person name="Christoffels A."/>
            <person name="Clutterbuck D.R."/>
            <person name="Crowe M.L."/>
            <person name="Dalla E."/>
            <person name="Dalrymple B.P."/>
            <person name="de Bono B."/>
            <person name="Della Gatta G."/>
            <person name="di Bernardo D."/>
            <person name="Down T."/>
            <person name="Engstrom P."/>
            <person name="Fagiolini M."/>
            <person name="Faulkner G."/>
            <person name="Fletcher C.F."/>
            <person name="Fukushima T."/>
            <person name="Furuno M."/>
            <person name="Futaki S."/>
            <person name="Gariboldi M."/>
            <person name="Georgii-Hemming P."/>
            <person name="Gingeras T.R."/>
            <person name="Gojobori T."/>
            <person name="Green R.E."/>
            <person name="Gustincich S."/>
            <person name="Harbers M."/>
            <person name="Hayashi Y."/>
            <person name="Hensch T.K."/>
            <person name="Hirokawa N."/>
            <person name="Hill D."/>
            <person name="Huminiecki L."/>
            <person name="Iacono M."/>
            <person name="Ikeo K."/>
            <person name="Iwama A."/>
            <person name="Ishikawa T."/>
            <person name="Jakt M."/>
            <person name="Kanapin A."/>
            <person name="Katoh M."/>
            <person name="Kawasawa Y."/>
            <person name="Kelso J."/>
            <person name="Kitamura H."/>
            <person name="Kitano H."/>
            <person name="Kollias G."/>
            <person name="Krishnan S.P."/>
            <person name="Kruger A."/>
            <person name="Kummerfeld S.K."/>
            <person name="Kurochkin I.V."/>
            <person name="Lareau L.F."/>
            <person name="Lazarevic D."/>
            <person name="Lipovich L."/>
            <person name="Liu J."/>
            <person name="Liuni S."/>
            <person name="McWilliam S."/>
            <person name="Madan Babu M."/>
            <person name="Madera M."/>
            <person name="Marchionni L."/>
            <person name="Matsuda H."/>
            <person name="Matsuzawa S."/>
            <person name="Miki H."/>
            <person name="Mignone F."/>
            <person name="Miyake S."/>
            <person name="Morris K."/>
            <person name="Mottagui-Tabar S."/>
            <person name="Mulder N."/>
            <person name="Nakano N."/>
            <person name="Nakauchi H."/>
            <person name="Ng P."/>
            <person name="Nilsson R."/>
            <person name="Nishiguchi S."/>
            <person name="Nishikawa S."/>
            <person name="Nori F."/>
            <person name="Ohara O."/>
            <person name="Okazaki Y."/>
            <person name="Orlando V."/>
            <person name="Pang K.C."/>
            <person name="Pavan W.J."/>
            <person name="Pavesi G."/>
            <person name="Pesole G."/>
            <person name="Petrovsky N."/>
            <person name="Piazza S."/>
            <person name="Reed J."/>
            <person name="Reid J.F."/>
            <person name="Ring B.Z."/>
            <person name="Ringwald M."/>
            <person name="Rost B."/>
            <person name="Ruan Y."/>
            <person name="Salzberg S.L."/>
            <person name="Sandelin A."/>
            <person name="Schneider C."/>
            <person name="Schoenbach C."/>
            <person name="Sekiguchi K."/>
            <person name="Semple C.A."/>
            <person name="Seno S."/>
            <person name="Sessa L."/>
            <person name="Sheng Y."/>
            <person name="Shibata Y."/>
            <person name="Shimada H."/>
            <person name="Shimada K."/>
            <person name="Silva D."/>
            <person name="Sinclair B."/>
            <person name="Sperling S."/>
            <person name="Stupka E."/>
            <person name="Sugiura K."/>
            <person name="Sultana R."/>
            <person name="Takenaka Y."/>
            <person name="Taki K."/>
            <person name="Tammoja K."/>
            <person name="Tan S.L."/>
            <person name="Tang S."/>
            <person name="Taylor M.S."/>
            <person name="Tegner J."/>
            <person name="Teichmann S.A."/>
            <person name="Ueda H.R."/>
            <person name="van Nimwegen E."/>
            <person name="Verardo R."/>
            <person name="Wei C.L."/>
            <person name="Yagi K."/>
            <person name="Yamanishi H."/>
            <person name="Zabarovsky E."/>
            <person name="Zhu S."/>
            <person name="Zimmer A."/>
            <person name="Hide W."/>
            <person name="Bult C."/>
            <person name="Grimmond S.M."/>
            <person name="Teasdale R.D."/>
            <person name="Liu E.T."/>
            <person name="Brusic V."/>
            <person name="Quackenbush J."/>
            <person name="Wahlestedt C."/>
            <person name="Mattick J.S."/>
            <person name="Hume D.A."/>
            <person name="Kai C."/>
            <person name="Sasaki D."/>
            <person name="Tomaru Y."/>
            <person name="Fukuda S."/>
            <person name="Kanamori-Katayama M."/>
            <person name="Suzuki M."/>
            <person name="Aoki J."/>
            <person name="Arakawa T."/>
            <person name="Iida J."/>
            <person name="Imamura K."/>
            <person name="Itoh M."/>
            <person name="Kato T."/>
            <person name="Kawaji H."/>
            <person name="Kawagashira N."/>
            <person name="Kawashima T."/>
            <person name="Kojima M."/>
            <person name="Kondo S."/>
            <person name="Konno H."/>
            <person name="Nakano K."/>
            <person name="Ninomiya N."/>
            <person name="Nishio T."/>
            <person name="Okada M."/>
            <person name="Plessy C."/>
            <person name="Shibata K."/>
            <person name="Shiraki T."/>
            <person name="Suzuki S."/>
            <person name="Tagami M."/>
            <person name="Waki K."/>
            <person name="Watahiki A."/>
            <person name="Okamura-Oho Y."/>
            <person name="Suzuki H."/>
            <person name="Kawai J."/>
            <person name="Hayashizaki Y."/>
        </authorList>
    </citation>
    <scope>NUCLEOTIDE SEQUENCE [LARGE SCALE MRNA]</scope>
    <source>
        <strain>C57BL/6J</strain>
        <strain>NOD</strain>
        <tissue>Cerebellum</tissue>
        <tissue>Dendritic cell</tissue>
        <tissue>Spleen</tissue>
    </source>
</reference>
<reference key="3">
    <citation type="journal article" date="2009" name="PLoS Biol.">
        <title>Lineage-specific biology revealed by a finished genome assembly of the mouse.</title>
        <authorList>
            <person name="Church D.M."/>
            <person name="Goodstadt L."/>
            <person name="Hillier L.W."/>
            <person name="Zody M.C."/>
            <person name="Goldstein S."/>
            <person name="She X."/>
            <person name="Bult C.J."/>
            <person name="Agarwala R."/>
            <person name="Cherry J.L."/>
            <person name="DiCuccio M."/>
            <person name="Hlavina W."/>
            <person name="Kapustin Y."/>
            <person name="Meric P."/>
            <person name="Maglott D."/>
            <person name="Birtle Z."/>
            <person name="Marques A.C."/>
            <person name="Graves T."/>
            <person name="Zhou S."/>
            <person name="Teague B."/>
            <person name="Potamousis K."/>
            <person name="Churas C."/>
            <person name="Place M."/>
            <person name="Herschleb J."/>
            <person name="Runnheim R."/>
            <person name="Forrest D."/>
            <person name="Amos-Landgraf J."/>
            <person name="Schwartz D.C."/>
            <person name="Cheng Z."/>
            <person name="Lindblad-Toh K."/>
            <person name="Eichler E.E."/>
            <person name="Ponting C.P."/>
        </authorList>
    </citation>
    <scope>NUCLEOTIDE SEQUENCE [LARGE SCALE GENOMIC DNA]</scope>
    <source>
        <strain>C57BL/6J</strain>
    </source>
</reference>
<reference key="4">
    <citation type="journal article" date="2004" name="Genome Res.">
        <title>The status, quality, and expansion of the NIH full-length cDNA project: the Mammalian Gene Collection (MGC).</title>
        <authorList>
            <consortium name="The MGC Project Team"/>
        </authorList>
    </citation>
    <scope>NUCLEOTIDE SEQUENCE [LARGE SCALE MRNA]</scope>
    <source>
        <strain>Czech II</strain>
        <tissue>Mammary tumor</tissue>
    </source>
</reference>
<reference key="5">
    <citation type="journal article" date="2013" name="Cell Metab.">
        <title>Tmem64 modulates calcium signaling during RANKL-mediated osteoclast differentiation.</title>
        <authorList>
            <person name="Kim H."/>
            <person name="Kim T."/>
            <person name="Jeong B.C."/>
            <person name="Cho I.T."/>
            <person name="Han D."/>
            <person name="Takegahara N."/>
            <person name="Negishi-Koga T."/>
            <person name="Takayanagi H."/>
            <person name="Lee J.H."/>
            <person name="Sul J.Y."/>
            <person name="Prasad V."/>
            <person name="Lee S.H."/>
            <person name="Choi Y."/>
        </authorList>
    </citation>
    <scope>FUNCTION</scope>
    <scope>TISSUE SPECIFICITY</scope>
    <scope>INTERACTION WITH ATP2A2</scope>
    <scope>DISRUPTION PHENOTYPE</scope>
    <scope>SUBCELLULAR LOCATION</scope>
</reference>
<reference key="6">
    <citation type="journal article" date="2015" name="Bone">
        <title>Transmembrane protein 64 reciprocally regulates osteoblast and adipocyte differentiation by modulating Wnt/beta-catenin signaling.</title>
        <authorList>
            <person name="Jeong B.C."/>
            <person name="Kim T.S."/>
            <person name="Kim H.S."/>
            <person name="Lee S.H."/>
            <person name="Choi Y."/>
        </authorList>
    </citation>
    <scope>FUNCTION</scope>
    <scope>DISRUPTION PHENOTYPE</scope>
</reference>